<evidence type="ECO:0000250" key="1"/>
<evidence type="ECO:0000255" key="2"/>
<evidence type="ECO:0000305" key="3"/>
<comment type="function">
    <text evidence="1">Involved in protein export. Participates in an early event of protein translocation (By similarity).</text>
</comment>
<comment type="subcellular location">
    <subcellularLocation>
        <location evidence="1">Cell membrane</location>
        <topology evidence="1">Multi-pass membrane protein</topology>
    </subcellularLocation>
</comment>
<comment type="similarity">
    <text evidence="3">Belongs to the SecG family.</text>
</comment>
<protein>
    <recommendedName>
        <fullName>Probable protein-export membrane protein SecG</fullName>
    </recommendedName>
</protein>
<sequence>MDLVRFFIFIIFVIVSIFIILLVLIQDEQGDGIGGVFGGGSSSIFGAKSSSVAVKITGFFIALFFIFVVLLSFLNTRRADDSFLNDIKTENKNSSTFWDDENSESDANINEIKENNLKEK</sequence>
<accession>O51083</accession>
<organism>
    <name type="scientific">Borreliella burgdorferi (strain ATCC 35210 / DSM 4680 / CIP 102532 / B31)</name>
    <name type="common">Borrelia burgdorferi</name>
    <dbReference type="NCBI Taxonomy" id="224326"/>
    <lineage>
        <taxon>Bacteria</taxon>
        <taxon>Pseudomonadati</taxon>
        <taxon>Spirochaetota</taxon>
        <taxon>Spirochaetia</taxon>
        <taxon>Spirochaetales</taxon>
        <taxon>Borreliaceae</taxon>
        <taxon>Borreliella</taxon>
    </lineage>
</organism>
<gene>
    <name type="primary">secG</name>
    <name type="ordered locus">BB_0054</name>
</gene>
<keyword id="KW-1003">Cell membrane</keyword>
<keyword id="KW-0472">Membrane</keyword>
<keyword id="KW-0653">Protein transport</keyword>
<keyword id="KW-1185">Reference proteome</keyword>
<keyword id="KW-0811">Translocation</keyword>
<keyword id="KW-0812">Transmembrane</keyword>
<keyword id="KW-1133">Transmembrane helix</keyword>
<keyword id="KW-0813">Transport</keyword>
<proteinExistence type="inferred from homology"/>
<dbReference type="EMBL" id="AE000783">
    <property type="protein sequence ID" value="AAC66457.2"/>
    <property type="molecule type" value="Genomic_DNA"/>
</dbReference>
<dbReference type="PIR" id="F70106">
    <property type="entry name" value="F70106"/>
</dbReference>
<dbReference type="RefSeq" id="NP_212188.2">
    <property type="nucleotide sequence ID" value="NC_001318.1"/>
</dbReference>
<dbReference type="RefSeq" id="WP_002658319.1">
    <property type="nucleotide sequence ID" value="NC_001318.1"/>
</dbReference>
<dbReference type="STRING" id="224326.BB_0054"/>
<dbReference type="PaxDb" id="224326-BB_0054"/>
<dbReference type="EnsemblBacteria" id="AAC66457">
    <property type="protein sequence ID" value="AAC66457"/>
    <property type="gene ID" value="BB_0054"/>
</dbReference>
<dbReference type="GeneID" id="56568163"/>
<dbReference type="KEGG" id="bbu:BB_0054"/>
<dbReference type="PATRIC" id="fig|224326.49.peg.452"/>
<dbReference type="HOGENOM" id="CLU_094156_0_1_12"/>
<dbReference type="OrthoDB" id="352909at2"/>
<dbReference type="Proteomes" id="UP000001807">
    <property type="component" value="Chromosome"/>
</dbReference>
<dbReference type="GO" id="GO:0005886">
    <property type="term" value="C:plasma membrane"/>
    <property type="evidence" value="ECO:0007669"/>
    <property type="project" value="UniProtKB-SubCell"/>
</dbReference>
<dbReference type="GO" id="GO:0015450">
    <property type="term" value="F:protein-transporting ATPase activity"/>
    <property type="evidence" value="ECO:0007669"/>
    <property type="project" value="InterPro"/>
</dbReference>
<dbReference type="GO" id="GO:0065002">
    <property type="term" value="P:intracellular protein transmembrane transport"/>
    <property type="evidence" value="ECO:0007669"/>
    <property type="project" value="TreeGrafter"/>
</dbReference>
<dbReference type="GO" id="GO:0009306">
    <property type="term" value="P:protein secretion"/>
    <property type="evidence" value="ECO:0007669"/>
    <property type="project" value="InterPro"/>
</dbReference>
<dbReference type="GO" id="GO:0043952">
    <property type="term" value="P:protein transport by the Sec complex"/>
    <property type="evidence" value="ECO:0007669"/>
    <property type="project" value="TreeGrafter"/>
</dbReference>
<dbReference type="InterPro" id="IPR004692">
    <property type="entry name" value="SecG"/>
</dbReference>
<dbReference type="NCBIfam" id="TIGR00810">
    <property type="entry name" value="secG"/>
    <property type="match status" value="1"/>
</dbReference>
<dbReference type="PANTHER" id="PTHR34182">
    <property type="entry name" value="PROTEIN-EXPORT MEMBRANE PROTEIN SECG"/>
    <property type="match status" value="1"/>
</dbReference>
<dbReference type="PANTHER" id="PTHR34182:SF1">
    <property type="entry name" value="PROTEIN-EXPORT MEMBRANE PROTEIN SECG"/>
    <property type="match status" value="1"/>
</dbReference>
<dbReference type="Pfam" id="PF03840">
    <property type="entry name" value="SecG"/>
    <property type="match status" value="1"/>
</dbReference>
<dbReference type="PRINTS" id="PR01651">
    <property type="entry name" value="SECGEXPORT"/>
</dbReference>
<feature type="chain" id="PRO_0000157221" description="Probable protein-export membrane protein SecG">
    <location>
        <begin position="1"/>
        <end position="120"/>
    </location>
</feature>
<feature type="transmembrane region" description="Helical" evidence="2">
    <location>
        <begin position="6"/>
        <end position="26"/>
    </location>
</feature>
<feature type="transmembrane region" description="Helical" evidence="2">
    <location>
        <begin position="54"/>
        <end position="74"/>
    </location>
</feature>
<name>SECG_BORBU</name>
<reference key="1">
    <citation type="journal article" date="1997" name="Nature">
        <title>Genomic sequence of a Lyme disease spirochaete, Borrelia burgdorferi.</title>
        <authorList>
            <person name="Fraser C.M."/>
            <person name="Casjens S."/>
            <person name="Huang W.M."/>
            <person name="Sutton G.G."/>
            <person name="Clayton R.A."/>
            <person name="Lathigra R."/>
            <person name="White O."/>
            <person name="Ketchum K.A."/>
            <person name="Dodson R.J."/>
            <person name="Hickey E.K."/>
            <person name="Gwinn M.L."/>
            <person name="Dougherty B.A."/>
            <person name="Tomb J.-F."/>
            <person name="Fleischmann R.D."/>
            <person name="Richardson D.L."/>
            <person name="Peterson J.D."/>
            <person name="Kerlavage A.R."/>
            <person name="Quackenbush J."/>
            <person name="Salzberg S.L."/>
            <person name="Hanson M."/>
            <person name="van Vugt R."/>
            <person name="Palmer N."/>
            <person name="Adams M.D."/>
            <person name="Gocayne J.D."/>
            <person name="Weidman J.F."/>
            <person name="Utterback T.R."/>
            <person name="Watthey L."/>
            <person name="McDonald L.A."/>
            <person name="Artiach P."/>
            <person name="Bowman C."/>
            <person name="Garland S.A."/>
            <person name="Fujii C."/>
            <person name="Cotton M.D."/>
            <person name="Horst K."/>
            <person name="Roberts K.M."/>
            <person name="Hatch B."/>
            <person name="Smith H.O."/>
            <person name="Venter J.C."/>
        </authorList>
    </citation>
    <scope>NUCLEOTIDE SEQUENCE [LARGE SCALE GENOMIC DNA]</scope>
    <source>
        <strain>ATCC 35210 / DSM 4680 / CIP 102532 / B31</strain>
    </source>
</reference>